<name>RNJL_SACS2</name>
<evidence type="ECO:0000250" key="1">
    <source>
        <dbReference type="UniProtKB" id="Q9V076"/>
    </source>
</evidence>
<evidence type="ECO:0000269" key="2">
    <source>
    </source>
</evidence>
<evidence type="ECO:0000303" key="3">
    <source>
    </source>
</evidence>
<evidence type="ECO:0000303" key="4">
    <source>
    </source>
</evidence>
<evidence type="ECO:0000305" key="5"/>
<evidence type="ECO:0000312" key="6">
    <source>
        <dbReference type="EMBL" id="AAK40713.1"/>
    </source>
</evidence>
<protein>
    <recommendedName>
        <fullName evidence="4">RNase aCSPSF2</fullName>
    </recommendedName>
    <alternativeName>
        <fullName evidence="3">Sso-RNase J</fullName>
    </alternativeName>
</protein>
<keyword id="KW-0269">Exonuclease</keyword>
<keyword id="KW-0378">Hydrolase</keyword>
<keyword id="KW-0460">Magnesium</keyword>
<keyword id="KW-0479">Metal-binding</keyword>
<keyword id="KW-0540">Nuclease</keyword>
<keyword id="KW-1185">Reference proteome</keyword>
<keyword id="KW-0862">Zinc</keyword>
<dbReference type="EMBL" id="AE006641">
    <property type="protein sequence ID" value="AAK40713.1"/>
    <property type="molecule type" value="Genomic_DNA"/>
</dbReference>
<dbReference type="PIR" id="B90182">
    <property type="entry name" value="B90182"/>
</dbReference>
<dbReference type="SMR" id="Q980D0"/>
<dbReference type="STRING" id="273057.SSO0386"/>
<dbReference type="PaxDb" id="273057-SSO0386"/>
<dbReference type="EnsemblBacteria" id="AAK40713">
    <property type="protein sequence ID" value="AAK40713"/>
    <property type="gene ID" value="SSO0386"/>
</dbReference>
<dbReference type="KEGG" id="sso:SSO0386"/>
<dbReference type="PATRIC" id="fig|273057.12.peg.379"/>
<dbReference type="eggNOG" id="arCOG00541">
    <property type="taxonomic scope" value="Archaea"/>
</dbReference>
<dbReference type="HOGENOM" id="CLU_009673_5_1_2"/>
<dbReference type="InParanoid" id="Q980D0"/>
<dbReference type="PhylomeDB" id="Q980D0"/>
<dbReference type="BRENDA" id="3.1.13.B1">
    <property type="organism ID" value="6163"/>
</dbReference>
<dbReference type="Proteomes" id="UP000001974">
    <property type="component" value="Chromosome"/>
</dbReference>
<dbReference type="GO" id="GO:0004527">
    <property type="term" value="F:exonuclease activity"/>
    <property type="evidence" value="ECO:0007669"/>
    <property type="project" value="UniProtKB-KW"/>
</dbReference>
<dbReference type="GO" id="GO:0046872">
    <property type="term" value="F:metal ion binding"/>
    <property type="evidence" value="ECO:0007669"/>
    <property type="project" value="UniProtKB-KW"/>
</dbReference>
<dbReference type="GO" id="GO:0004521">
    <property type="term" value="F:RNA endonuclease activity"/>
    <property type="evidence" value="ECO:0000318"/>
    <property type="project" value="GO_Central"/>
</dbReference>
<dbReference type="CDD" id="cd16295">
    <property type="entry name" value="TTHA0252-CPSF-like_MBL-fold"/>
    <property type="match status" value="1"/>
</dbReference>
<dbReference type="Gene3D" id="3.40.50.10890">
    <property type="match status" value="1"/>
</dbReference>
<dbReference type="Gene3D" id="3.60.15.10">
    <property type="entry name" value="Ribonuclease Z/Hydroxyacylglutathione hydrolase-like"/>
    <property type="match status" value="1"/>
</dbReference>
<dbReference type="InterPro" id="IPR022712">
    <property type="entry name" value="Beta_Casp"/>
</dbReference>
<dbReference type="InterPro" id="IPR050698">
    <property type="entry name" value="MBL"/>
</dbReference>
<dbReference type="InterPro" id="IPR001279">
    <property type="entry name" value="Metallo-B-lactamas"/>
</dbReference>
<dbReference type="InterPro" id="IPR036866">
    <property type="entry name" value="RibonucZ/Hydroxyglut_hydro"/>
</dbReference>
<dbReference type="InterPro" id="IPR011108">
    <property type="entry name" value="RMMBL"/>
</dbReference>
<dbReference type="PANTHER" id="PTHR11203">
    <property type="entry name" value="CLEAVAGE AND POLYADENYLATION SPECIFICITY FACTOR FAMILY MEMBER"/>
    <property type="match status" value="1"/>
</dbReference>
<dbReference type="PANTHER" id="PTHR11203:SF52">
    <property type="entry name" value="MRNA 3-END PROCESSING FACTOR"/>
    <property type="match status" value="1"/>
</dbReference>
<dbReference type="Pfam" id="PF10996">
    <property type="entry name" value="Beta-Casp"/>
    <property type="match status" value="1"/>
</dbReference>
<dbReference type="Pfam" id="PF16661">
    <property type="entry name" value="Lactamase_B_6"/>
    <property type="match status" value="1"/>
</dbReference>
<dbReference type="Pfam" id="PF07521">
    <property type="entry name" value="RMMBL"/>
    <property type="match status" value="1"/>
</dbReference>
<dbReference type="SMART" id="SM01027">
    <property type="entry name" value="Beta-Casp"/>
    <property type="match status" value="1"/>
</dbReference>
<dbReference type="SMART" id="SM00849">
    <property type="entry name" value="Lactamase_B"/>
    <property type="match status" value="1"/>
</dbReference>
<dbReference type="SUPFAM" id="SSF56281">
    <property type="entry name" value="Metallo-hydrolase/oxidoreductase"/>
    <property type="match status" value="1"/>
</dbReference>
<accession>Q980D0</accession>
<organism>
    <name type="scientific">Saccharolobus solfataricus (strain ATCC 35092 / DSM 1617 / JCM 11322 / P2)</name>
    <name type="common">Sulfolobus solfataricus</name>
    <dbReference type="NCBI Taxonomy" id="273057"/>
    <lineage>
        <taxon>Archaea</taxon>
        <taxon>Thermoproteota</taxon>
        <taxon>Thermoprotei</taxon>
        <taxon>Sulfolobales</taxon>
        <taxon>Sulfolobaceae</taxon>
        <taxon>Saccharolobus</taxon>
    </lineage>
</organism>
<feature type="chain" id="PRO_0000460374" description="RNase aCSPSF2">
    <location>
        <begin position="1"/>
        <end position="492"/>
    </location>
</feature>
<feature type="binding site" evidence="1">
    <location>
        <position position="130"/>
    </location>
    <ligand>
        <name>a divalent metal cation</name>
        <dbReference type="ChEBI" id="CHEBI:60240"/>
        <label>1</label>
        <note>catalytic</note>
    </ligand>
</feature>
<feature type="binding site" evidence="1">
    <location>
        <position position="132"/>
    </location>
    <ligand>
        <name>a divalent metal cation</name>
        <dbReference type="ChEBI" id="CHEBI:60240"/>
        <label>1</label>
        <note>catalytic</note>
    </ligand>
</feature>
<feature type="binding site" evidence="1">
    <location>
        <position position="134"/>
    </location>
    <ligand>
        <name>a divalent metal cation</name>
        <dbReference type="ChEBI" id="CHEBI:60240"/>
        <label>2</label>
        <note>catalytic</note>
    </ligand>
</feature>
<feature type="binding site" evidence="1">
    <location>
        <position position="135"/>
    </location>
    <ligand>
        <name>a divalent metal cation</name>
        <dbReference type="ChEBI" id="CHEBI:60240"/>
        <label>2</label>
        <note>catalytic</note>
    </ligand>
</feature>
<feature type="binding site" evidence="1">
    <location>
        <position position="213"/>
    </location>
    <ligand>
        <name>a divalent metal cation</name>
        <dbReference type="ChEBI" id="CHEBI:60240"/>
        <label>1</label>
        <note>catalytic</note>
    </ligand>
</feature>
<feature type="binding site" evidence="1">
    <location>
        <position position="234"/>
    </location>
    <ligand>
        <name>a divalent metal cation</name>
        <dbReference type="ChEBI" id="CHEBI:60240"/>
        <label>1</label>
        <note>catalytic</note>
    </ligand>
</feature>
<feature type="binding site" evidence="1">
    <location>
        <position position="234"/>
    </location>
    <ligand>
        <name>a divalent metal cation</name>
        <dbReference type="ChEBI" id="CHEBI:60240"/>
        <label>2</label>
        <note>catalytic</note>
    </ligand>
</feature>
<feature type="binding site" evidence="1">
    <location>
        <position position="460"/>
    </location>
    <ligand>
        <name>a divalent metal cation</name>
        <dbReference type="ChEBI" id="CHEBI:60240"/>
        <label>2</label>
        <note>catalytic</note>
    </ligand>
</feature>
<gene>
    <name evidence="6" type="ordered locus">SSO0386</name>
</gene>
<comment type="function">
    <text evidence="2">A 5'-3' exoribonuclease, more active on 5'-monophosphorylated and 5'-hydroxylated RNA than 5'-tri-phosphorylated RNA; note there is no evidence for accumulation of 5'-monophosphorylated RNA in this organism (PubMed:21115637). Translation initiation factor 2 subunit gamma but not subunit alpha protects 5'-tri-phosphorylated RNA from degradation by this enzyme (PubMed:21115637).</text>
</comment>
<comment type="cofactor">
    <cofactor evidence="2">
        <name>Mg(2+)</name>
        <dbReference type="ChEBI" id="CHEBI:18420"/>
    </cofactor>
</comment>
<comment type="similarity">
    <text evidence="5">Belongs to the metallo-beta-lactamase superfamily. RNA-metabolizing metallo-beta-lactamase-like family.</text>
</comment>
<sequence>MPMTFVFITVGFSITIFFSLVSIITLVAFICSVFIPILSIFFRSEGFIFAITCFIEEEVNLIVCGYDISQMNYFLKILGGGREVGRSAIEVGNSDGSIILDYGVNFDEKDNPNFPLQEMPGKVKGFVVSHAHLDHIGALPIYQIGSLNTKVYGTVATRIITETMLKDFLKLSGAKIPYEWVEVRKTMDNFMAIGYGEEVEIDSLKVSLYNAGHIPGSSIIKVSSEKGVIAFTGDINLTETKLMKPAEIENIGDANVLVMESTYGKFNHPNRKDVENDFYDKVMEVVESGGTVLVPAFSLARSQEVLSVLAERNFPYPVYYDGMSREITEIMLGFKEFLNRPDLLKKAYDNFNYVKGWEDRHRAWKEKGVIVASAGMLKGGPAVYYFKKLSENSKNAVFLVSYQAINTPGRKLLEMGKFDEYSGLLKARLEIFDFSSHAGRRQLLEIVKSVKDLEKVVLVHGSPDNESSLADLIKQEIGVEVITPENGQEISL</sequence>
<proteinExistence type="inferred from homology"/>
<reference evidence="6" key="1">
    <citation type="journal article" date="2001" name="Proc. Natl. Acad. Sci. U.S.A.">
        <title>The complete genome of the crenarchaeon Sulfolobus solfataricus P2.</title>
        <authorList>
            <person name="She Q."/>
            <person name="Singh R.K."/>
            <person name="Confalonieri F."/>
            <person name="Zivanovic Y."/>
            <person name="Allard G."/>
            <person name="Awayez M.J."/>
            <person name="Chan-Weiher C.C.-Y."/>
            <person name="Clausen I.G."/>
            <person name="Curtis B.A."/>
            <person name="De Moors A."/>
            <person name="Erauso G."/>
            <person name="Fletcher C."/>
            <person name="Gordon P.M.K."/>
            <person name="Heikamp-de Jong I."/>
            <person name="Jeffries A.C."/>
            <person name="Kozera C.J."/>
            <person name="Medina N."/>
            <person name="Peng X."/>
            <person name="Thi-Ngoc H.P."/>
            <person name="Redder P."/>
            <person name="Schenk M.E."/>
            <person name="Theriault C."/>
            <person name="Tolstrup N."/>
            <person name="Charlebois R.L."/>
            <person name="Doolittle W.F."/>
            <person name="Duguet M."/>
            <person name="Gaasterland T."/>
            <person name="Garrett R.A."/>
            <person name="Ragan M.A."/>
            <person name="Sensen C.W."/>
            <person name="Van der Oost J."/>
        </authorList>
    </citation>
    <scope>NUCLEOTIDE SEQUENCE [LARGE SCALE GENOMIC DNA]</scope>
    <source>
        <strain>ATCC 35092 / DSM 1617 / JCM 11322 / P2</strain>
    </source>
</reference>
<reference key="2">
    <citation type="journal article" date="2011" name="RNA">
        <title>Identification of an RNase J ortholog in Sulfolobus solfataricus: implications for 5'-to-3' directional decay and 5'-end protection of mRNA in Crenarchaeota.</title>
        <authorList>
            <person name="Hasenoehrl D."/>
            <person name="Konrat R."/>
            <person name="Blaesi U."/>
        </authorList>
    </citation>
    <scope>FUNCTION</scope>
    <scope>COFACTOR</scope>
    <source>
        <strain>ATCC 35092 / DSM 1617 / JCM 11322 / P2</strain>
    </source>
</reference>
<reference key="3">
    <citation type="journal article" date="2013" name="Nucleic Acids Res.">
        <title>Archaeal beta-CASP ribonucleases of the aCPSF1 family are orthologs of the eukaryal CPSF-73 factor.</title>
        <authorList>
            <person name="Phung D.K."/>
            <person name="Rinaldi D."/>
            <person name="Langendijk-Genevaux P.S."/>
            <person name="Quentin Y."/>
            <person name="Carpousis A.J."/>
            <person name="Clouet-d'Orval B."/>
        </authorList>
    </citation>
    <scope>NOMENCLATURE</scope>
</reference>